<proteinExistence type="predicted"/>
<organism>
    <name type="scientific">Methanocaldococcus jannaschii (strain ATCC 43067 / DSM 2661 / JAL-1 / JCM 10045 / NBRC 100440)</name>
    <name type="common">Methanococcus jannaschii</name>
    <dbReference type="NCBI Taxonomy" id="243232"/>
    <lineage>
        <taxon>Archaea</taxon>
        <taxon>Methanobacteriati</taxon>
        <taxon>Methanobacteriota</taxon>
        <taxon>Methanomada group</taxon>
        <taxon>Methanococci</taxon>
        <taxon>Methanococcales</taxon>
        <taxon>Methanocaldococcaceae</taxon>
        <taxon>Methanocaldococcus</taxon>
    </lineage>
</organism>
<sequence>MELSIENELDKNILSILKDQDLIEDYALKVKIERCNNKYICTCDVIIIQKKLFIKKPVKIEPIKKRLMEILEAKPYNVEYRIDIRLY</sequence>
<keyword id="KW-1185">Reference proteome</keyword>
<feature type="chain" id="PRO_0000107110" description="Uncharacterized protein MJ0926">
    <location>
        <begin position="1"/>
        <end position="87"/>
    </location>
</feature>
<protein>
    <recommendedName>
        <fullName>Uncharacterized protein MJ0926</fullName>
    </recommendedName>
</protein>
<accession>Q58336</accession>
<gene>
    <name type="ordered locus">MJ0926</name>
</gene>
<reference key="1">
    <citation type="journal article" date="1996" name="Science">
        <title>Complete genome sequence of the methanogenic archaeon, Methanococcus jannaschii.</title>
        <authorList>
            <person name="Bult C.J."/>
            <person name="White O."/>
            <person name="Olsen G.J."/>
            <person name="Zhou L."/>
            <person name="Fleischmann R.D."/>
            <person name="Sutton G.G."/>
            <person name="Blake J.A."/>
            <person name="FitzGerald L.M."/>
            <person name="Clayton R.A."/>
            <person name="Gocayne J.D."/>
            <person name="Kerlavage A.R."/>
            <person name="Dougherty B.A."/>
            <person name="Tomb J.-F."/>
            <person name="Adams M.D."/>
            <person name="Reich C.I."/>
            <person name="Overbeek R."/>
            <person name="Kirkness E.F."/>
            <person name="Weinstock K.G."/>
            <person name="Merrick J.M."/>
            <person name="Glodek A."/>
            <person name="Scott J.L."/>
            <person name="Geoghagen N.S.M."/>
            <person name="Weidman J.F."/>
            <person name="Fuhrmann J.L."/>
            <person name="Nguyen D."/>
            <person name="Utterback T.R."/>
            <person name="Kelley J.M."/>
            <person name="Peterson J.D."/>
            <person name="Sadow P.W."/>
            <person name="Hanna M.C."/>
            <person name="Cotton M.D."/>
            <person name="Roberts K.M."/>
            <person name="Hurst M.A."/>
            <person name="Kaine B.P."/>
            <person name="Borodovsky M."/>
            <person name="Klenk H.-P."/>
            <person name="Fraser C.M."/>
            <person name="Smith H.O."/>
            <person name="Woese C.R."/>
            <person name="Venter J.C."/>
        </authorList>
    </citation>
    <scope>NUCLEOTIDE SEQUENCE [LARGE SCALE GENOMIC DNA]</scope>
    <source>
        <strain>ATCC 43067 / DSM 2661 / JAL-1 / JCM 10045 / NBRC 100440</strain>
    </source>
</reference>
<name>Y926_METJA</name>
<dbReference type="EMBL" id="L77117">
    <property type="protein sequence ID" value="AAB98938.1"/>
    <property type="molecule type" value="Genomic_DNA"/>
</dbReference>
<dbReference type="PIR" id="F64415">
    <property type="entry name" value="F64415"/>
</dbReference>
<dbReference type="PaxDb" id="243232-MJ_0926"/>
<dbReference type="EnsemblBacteria" id="AAB98938">
    <property type="protein sequence ID" value="AAB98938"/>
    <property type="gene ID" value="MJ_0926"/>
</dbReference>
<dbReference type="KEGG" id="mja:MJ_0926"/>
<dbReference type="HOGENOM" id="CLU_2476021_0_0_2"/>
<dbReference type="InParanoid" id="Q58336"/>
<dbReference type="Proteomes" id="UP000000805">
    <property type="component" value="Chromosome"/>
</dbReference>